<dbReference type="EC" id="2.7.1.25" evidence="1"/>
<dbReference type="EMBL" id="CP000964">
    <property type="protein sequence ID" value="ACI10006.1"/>
    <property type="molecule type" value="Genomic_DNA"/>
</dbReference>
<dbReference type="SMR" id="B5XV31"/>
<dbReference type="KEGG" id="kpe:KPK_1011"/>
<dbReference type="HOGENOM" id="CLU_046932_1_0_6"/>
<dbReference type="UniPathway" id="UPA00140">
    <property type="reaction ID" value="UER00205"/>
</dbReference>
<dbReference type="Proteomes" id="UP000001734">
    <property type="component" value="Chromosome"/>
</dbReference>
<dbReference type="GO" id="GO:0004020">
    <property type="term" value="F:adenylylsulfate kinase activity"/>
    <property type="evidence" value="ECO:0007669"/>
    <property type="project" value="UniProtKB-UniRule"/>
</dbReference>
<dbReference type="GO" id="GO:0005524">
    <property type="term" value="F:ATP binding"/>
    <property type="evidence" value="ECO:0007669"/>
    <property type="project" value="UniProtKB-UniRule"/>
</dbReference>
<dbReference type="GO" id="GO:0070814">
    <property type="term" value="P:hydrogen sulfide biosynthetic process"/>
    <property type="evidence" value="ECO:0007669"/>
    <property type="project" value="UniProtKB-UniRule"/>
</dbReference>
<dbReference type="GO" id="GO:0000103">
    <property type="term" value="P:sulfate assimilation"/>
    <property type="evidence" value="ECO:0007669"/>
    <property type="project" value="UniProtKB-UniRule"/>
</dbReference>
<dbReference type="CDD" id="cd02027">
    <property type="entry name" value="APSK"/>
    <property type="match status" value="1"/>
</dbReference>
<dbReference type="FunFam" id="3.40.50.300:FF:000212">
    <property type="entry name" value="Adenylyl-sulfate kinase"/>
    <property type="match status" value="1"/>
</dbReference>
<dbReference type="Gene3D" id="3.40.50.300">
    <property type="entry name" value="P-loop containing nucleotide triphosphate hydrolases"/>
    <property type="match status" value="1"/>
</dbReference>
<dbReference type="HAMAP" id="MF_00065">
    <property type="entry name" value="Adenylyl_sulf_kinase"/>
    <property type="match status" value="1"/>
</dbReference>
<dbReference type="InterPro" id="IPR002891">
    <property type="entry name" value="APS_kinase"/>
</dbReference>
<dbReference type="InterPro" id="IPR027417">
    <property type="entry name" value="P-loop_NTPase"/>
</dbReference>
<dbReference type="NCBIfam" id="TIGR00455">
    <property type="entry name" value="apsK"/>
    <property type="match status" value="1"/>
</dbReference>
<dbReference type="NCBIfam" id="NF003013">
    <property type="entry name" value="PRK03846.1"/>
    <property type="match status" value="1"/>
</dbReference>
<dbReference type="PANTHER" id="PTHR11055:SF63">
    <property type="entry name" value="ADENYLYL-SULFATE KINASE 1, CHLOROPLASTIC"/>
    <property type="match status" value="1"/>
</dbReference>
<dbReference type="PANTHER" id="PTHR11055">
    <property type="entry name" value="BIFUNCTIONAL 3'-PHOSPHOADENOSINE 5'-PHOSPHOSULFATE SYNTHASE"/>
    <property type="match status" value="1"/>
</dbReference>
<dbReference type="Pfam" id="PF01583">
    <property type="entry name" value="APS_kinase"/>
    <property type="match status" value="1"/>
</dbReference>
<dbReference type="SUPFAM" id="SSF52540">
    <property type="entry name" value="P-loop containing nucleoside triphosphate hydrolases"/>
    <property type="match status" value="1"/>
</dbReference>
<comment type="function">
    <text evidence="1">Catalyzes the synthesis of activated sulfate.</text>
</comment>
<comment type="catalytic activity">
    <reaction evidence="1">
        <text>adenosine 5'-phosphosulfate + ATP = 3'-phosphoadenylyl sulfate + ADP + H(+)</text>
        <dbReference type="Rhea" id="RHEA:24152"/>
        <dbReference type="ChEBI" id="CHEBI:15378"/>
        <dbReference type="ChEBI" id="CHEBI:30616"/>
        <dbReference type="ChEBI" id="CHEBI:58243"/>
        <dbReference type="ChEBI" id="CHEBI:58339"/>
        <dbReference type="ChEBI" id="CHEBI:456216"/>
        <dbReference type="EC" id="2.7.1.25"/>
    </reaction>
</comment>
<comment type="pathway">
    <text evidence="1">Sulfur metabolism; hydrogen sulfide biosynthesis; sulfite from sulfate: step 2/3.</text>
</comment>
<comment type="similarity">
    <text evidence="1">Belongs to the APS kinase family.</text>
</comment>
<protein>
    <recommendedName>
        <fullName evidence="1">Adenylyl-sulfate kinase</fullName>
        <ecNumber evidence="1">2.7.1.25</ecNumber>
    </recommendedName>
    <alternativeName>
        <fullName evidence="1">APS kinase</fullName>
    </alternativeName>
    <alternativeName>
        <fullName evidence="1">ATP adenosine-5'-phosphosulfate 3'-phosphotransferase</fullName>
    </alternativeName>
    <alternativeName>
        <fullName evidence="1">Adenosine-5'-phosphosulfate kinase</fullName>
    </alternativeName>
</protein>
<organism>
    <name type="scientific">Klebsiella pneumoniae (strain 342)</name>
    <dbReference type="NCBI Taxonomy" id="507522"/>
    <lineage>
        <taxon>Bacteria</taxon>
        <taxon>Pseudomonadati</taxon>
        <taxon>Pseudomonadota</taxon>
        <taxon>Gammaproteobacteria</taxon>
        <taxon>Enterobacterales</taxon>
        <taxon>Enterobacteriaceae</taxon>
        <taxon>Klebsiella/Raoultella group</taxon>
        <taxon>Klebsiella</taxon>
        <taxon>Klebsiella pneumoniae complex</taxon>
    </lineage>
</organism>
<sequence>MAQHDENVVWHAHPVTQQQREQHHGHRGVVLWFTGLSGSGKSTVAGALEEALHERGVSTYLLDGDNVRHGLCSDLGFSDEDRKENIRRVGEVARLMVDAGLVVLTAFISPHRAERQMVRERLGEGRFIEVFVDTPLAICEARDPKGLYKKARAGELRNFTGIDSVYEAPEKAEIHLDGEQLVTNLVHQLLDLLQQSDIIRS</sequence>
<keyword id="KW-0067">ATP-binding</keyword>
<keyword id="KW-0418">Kinase</keyword>
<keyword id="KW-0547">Nucleotide-binding</keyword>
<keyword id="KW-0597">Phosphoprotein</keyword>
<keyword id="KW-0808">Transferase</keyword>
<proteinExistence type="inferred from homology"/>
<name>CYSC_KLEP3</name>
<evidence type="ECO:0000255" key="1">
    <source>
        <dbReference type="HAMAP-Rule" id="MF_00065"/>
    </source>
</evidence>
<gene>
    <name evidence="1" type="primary">cysC</name>
    <name type="ordered locus">KPK_1011</name>
</gene>
<reference key="1">
    <citation type="journal article" date="2008" name="PLoS Genet.">
        <title>Complete genome sequence of the N2-fixing broad host range endophyte Klebsiella pneumoniae 342 and virulence predictions verified in mice.</title>
        <authorList>
            <person name="Fouts D.E."/>
            <person name="Tyler H.L."/>
            <person name="DeBoy R.T."/>
            <person name="Daugherty S."/>
            <person name="Ren Q."/>
            <person name="Badger J.H."/>
            <person name="Durkin A.S."/>
            <person name="Huot H."/>
            <person name="Shrivastava S."/>
            <person name="Kothari S."/>
            <person name="Dodson R.J."/>
            <person name="Mohamoud Y."/>
            <person name="Khouri H."/>
            <person name="Roesch L.F.W."/>
            <person name="Krogfelt K.A."/>
            <person name="Struve C."/>
            <person name="Triplett E.W."/>
            <person name="Methe B.A."/>
        </authorList>
    </citation>
    <scope>NUCLEOTIDE SEQUENCE [LARGE SCALE GENOMIC DNA]</scope>
    <source>
        <strain>342</strain>
    </source>
</reference>
<accession>B5XV31</accession>
<feature type="chain" id="PRO_1000092243" description="Adenylyl-sulfate kinase">
    <location>
        <begin position="1"/>
        <end position="201"/>
    </location>
</feature>
<feature type="active site" description="Phosphoserine intermediate" evidence="1">
    <location>
        <position position="109"/>
    </location>
</feature>
<feature type="binding site" evidence="1">
    <location>
        <begin position="35"/>
        <end position="42"/>
    </location>
    <ligand>
        <name>ATP</name>
        <dbReference type="ChEBI" id="CHEBI:30616"/>
    </ligand>
</feature>